<name>PSBJ_THAPS</name>
<geneLocation type="chloroplast"/>
<reference key="1">
    <citation type="journal article" date="2007" name="Mol. Genet. Genomics">
        <title>Chloroplast genomes of the diatoms Phaeodactylum tricornutum and Thalassiosira pseudonana: comparison with other plastid genomes of the red lineage.</title>
        <authorList>
            <person name="Oudot-Le Secq M.-P."/>
            <person name="Grimwood J."/>
            <person name="Shapiro H."/>
            <person name="Armbrust E.V."/>
            <person name="Bowler C."/>
            <person name="Green B.R."/>
        </authorList>
    </citation>
    <scope>NUCLEOTIDE SEQUENCE [LARGE SCALE GENOMIC DNA]</scope>
    <source>
        <strain>CCMP1335 / NEPCC58 / CCAP 1085/12</strain>
    </source>
</reference>
<evidence type="ECO:0000255" key="1">
    <source>
        <dbReference type="HAMAP-Rule" id="MF_01305"/>
    </source>
</evidence>
<evidence type="ECO:0007829" key="2">
    <source>
        <dbReference type="PDB" id="8IWH"/>
    </source>
</evidence>
<keyword id="KW-0002">3D-structure</keyword>
<keyword id="KW-0150">Chloroplast</keyword>
<keyword id="KW-0472">Membrane</keyword>
<keyword id="KW-0602">Photosynthesis</keyword>
<keyword id="KW-0604">Photosystem II</keyword>
<keyword id="KW-0934">Plastid</keyword>
<keyword id="KW-0674">Reaction center</keyword>
<keyword id="KW-0793">Thylakoid</keyword>
<keyword id="KW-0812">Transmembrane</keyword>
<keyword id="KW-1133">Transmembrane helix</keyword>
<sequence length="39" mass="4045">MVNTGRVPLWLVGLVGGFAVITIVSLFIYGSYSGLGSSL</sequence>
<comment type="function">
    <text evidence="1">One of the components of the core complex of photosystem II (PSII). PSII is a light-driven water:plastoquinone oxidoreductase that uses light energy to abstract electrons from H(2)O, generating O(2) and a proton gradient subsequently used for ATP formation. It consists of a core antenna complex that captures photons, and an electron transfer chain that converts photonic excitation into a charge separation.</text>
</comment>
<comment type="subunit">
    <text evidence="1">PSII is composed of 1 copy each of membrane proteins PsbA, PsbB, PsbC, PsbD, PsbE, PsbF, PsbH, PsbI, PsbJ, PsbK, PsbL, PsbM, PsbT, PsbX, PsbY, PsbZ, Psb30/Ycf12, at least 3 peripheral proteins of the oxygen-evolving complex and a large number of cofactors. It forms dimeric complexes.</text>
</comment>
<comment type="subcellular location">
    <subcellularLocation>
        <location evidence="1">Plastid</location>
        <location evidence="1">Chloroplast thylakoid membrane</location>
        <topology evidence="1">Single-pass membrane protein</topology>
    </subcellularLocation>
</comment>
<comment type="similarity">
    <text evidence="1">Belongs to the PsbJ family.</text>
</comment>
<gene>
    <name evidence="1" type="primary">psbJ</name>
</gene>
<protein>
    <recommendedName>
        <fullName evidence="1">Photosystem II reaction center protein J</fullName>
        <shortName evidence="1">PSII-J</shortName>
    </recommendedName>
</protein>
<organism>
    <name type="scientific">Thalassiosira pseudonana</name>
    <name type="common">Marine diatom</name>
    <name type="synonym">Cyclotella nana</name>
    <dbReference type="NCBI Taxonomy" id="35128"/>
    <lineage>
        <taxon>Eukaryota</taxon>
        <taxon>Sar</taxon>
        <taxon>Stramenopiles</taxon>
        <taxon>Ochrophyta</taxon>
        <taxon>Bacillariophyta</taxon>
        <taxon>Coscinodiscophyceae</taxon>
        <taxon>Thalassiosirophycidae</taxon>
        <taxon>Thalassiosirales</taxon>
        <taxon>Thalassiosiraceae</taxon>
        <taxon>Thalassiosira</taxon>
    </lineage>
</organism>
<proteinExistence type="evidence at protein level"/>
<dbReference type="EMBL" id="EF067921">
    <property type="protein sequence ID" value="ABK20774.1"/>
    <property type="molecule type" value="Genomic_DNA"/>
</dbReference>
<dbReference type="RefSeq" id="YP_874551.1">
    <property type="nucleotide sequence ID" value="NC_008589.1"/>
</dbReference>
<dbReference type="PDB" id="8IWH">
    <property type="method" value="EM"/>
    <property type="resolution" value="2.68 A"/>
    <property type="chains" value="J/j=1-39"/>
</dbReference>
<dbReference type="PDB" id="8J5K">
    <property type="method" value="EM"/>
    <property type="resolution" value="2.93 A"/>
    <property type="chains" value="J/j=5-38"/>
</dbReference>
<dbReference type="PDBsum" id="8IWH"/>
<dbReference type="PDBsum" id="8J5K"/>
<dbReference type="EMDB" id="EMD-35766"/>
<dbReference type="SMR" id="A0T0T9"/>
<dbReference type="STRING" id="35128.A0T0T9"/>
<dbReference type="GeneID" id="4524846"/>
<dbReference type="InParanoid" id="A0T0T9"/>
<dbReference type="GO" id="GO:0009535">
    <property type="term" value="C:chloroplast thylakoid membrane"/>
    <property type="evidence" value="ECO:0007669"/>
    <property type="project" value="UniProtKB-SubCell"/>
</dbReference>
<dbReference type="GO" id="GO:0009523">
    <property type="term" value="C:photosystem II"/>
    <property type="evidence" value="ECO:0000318"/>
    <property type="project" value="GO_Central"/>
</dbReference>
<dbReference type="GO" id="GO:0009539">
    <property type="term" value="C:photosystem II reaction center"/>
    <property type="evidence" value="ECO:0007669"/>
    <property type="project" value="InterPro"/>
</dbReference>
<dbReference type="GO" id="GO:0015979">
    <property type="term" value="P:photosynthesis"/>
    <property type="evidence" value="ECO:0007669"/>
    <property type="project" value="UniProtKB-UniRule"/>
</dbReference>
<dbReference type="Gene3D" id="6.10.250.2070">
    <property type="match status" value="1"/>
</dbReference>
<dbReference type="HAMAP" id="MF_01305">
    <property type="entry name" value="PSII_PsbJ"/>
    <property type="match status" value="1"/>
</dbReference>
<dbReference type="InterPro" id="IPR002682">
    <property type="entry name" value="PSII_PsbJ"/>
</dbReference>
<dbReference type="InterPro" id="IPR037267">
    <property type="entry name" value="PSII_PsbJ_sf"/>
</dbReference>
<dbReference type="NCBIfam" id="NF002722">
    <property type="entry name" value="PRK02565.1"/>
    <property type="match status" value="1"/>
</dbReference>
<dbReference type="PANTHER" id="PTHR34812">
    <property type="entry name" value="PHOTOSYSTEM II REACTION CENTER PROTEIN J"/>
    <property type="match status" value="1"/>
</dbReference>
<dbReference type="PANTHER" id="PTHR34812:SF3">
    <property type="entry name" value="PHOTOSYSTEM II REACTION CENTER PROTEIN J"/>
    <property type="match status" value="1"/>
</dbReference>
<dbReference type="Pfam" id="PF01788">
    <property type="entry name" value="PsbJ"/>
    <property type="match status" value="1"/>
</dbReference>
<dbReference type="SUPFAM" id="SSF161021">
    <property type="entry name" value="Photosystem II reaction center protein J, PsbJ"/>
    <property type="match status" value="1"/>
</dbReference>
<feature type="chain" id="PRO_0000276123" description="Photosystem II reaction center protein J">
    <location>
        <begin position="1"/>
        <end position="39"/>
    </location>
</feature>
<feature type="transmembrane region" description="Helical" evidence="1">
    <location>
        <begin position="9"/>
        <end position="29"/>
    </location>
</feature>
<feature type="helix" evidence="2">
    <location>
        <begin position="12"/>
        <end position="31"/>
    </location>
</feature>
<accession>A0T0T9</accession>